<gene>
    <name evidence="1" type="primary">rlmE</name>
    <name evidence="1" type="synonym">ftsJ</name>
    <name evidence="1" type="synonym">rrmJ</name>
    <name type="ordered locus">RL0843</name>
</gene>
<name>RLME_RHIJ3</name>
<organism>
    <name type="scientific">Rhizobium johnstonii (strain DSM 114642 / LMG 32736 / 3841)</name>
    <name type="common">Rhizobium leguminosarum bv. viciae</name>
    <dbReference type="NCBI Taxonomy" id="216596"/>
    <lineage>
        <taxon>Bacteria</taxon>
        <taxon>Pseudomonadati</taxon>
        <taxon>Pseudomonadota</taxon>
        <taxon>Alphaproteobacteria</taxon>
        <taxon>Hyphomicrobiales</taxon>
        <taxon>Rhizobiaceae</taxon>
        <taxon>Rhizobium/Agrobacterium group</taxon>
        <taxon>Rhizobium</taxon>
        <taxon>Rhizobium johnstonii</taxon>
    </lineage>
</organism>
<accession>Q1ML15</accession>
<feature type="chain" id="PRO_0000282783" description="Ribosomal RNA large subunit methyltransferase E">
    <location>
        <begin position="1"/>
        <end position="239"/>
    </location>
</feature>
<feature type="region of interest" description="Disordered" evidence="2">
    <location>
        <begin position="1"/>
        <end position="20"/>
    </location>
</feature>
<feature type="compositionally biased region" description="Basic residues" evidence="2">
    <location>
        <begin position="11"/>
        <end position="20"/>
    </location>
</feature>
<feature type="active site" description="Proton acceptor" evidence="1">
    <location>
        <position position="184"/>
    </location>
</feature>
<feature type="binding site" evidence="1">
    <location>
        <position position="81"/>
    </location>
    <ligand>
        <name>S-adenosyl-L-methionine</name>
        <dbReference type="ChEBI" id="CHEBI:59789"/>
    </ligand>
</feature>
<feature type="binding site" evidence="1">
    <location>
        <position position="83"/>
    </location>
    <ligand>
        <name>S-adenosyl-L-methionine</name>
        <dbReference type="ChEBI" id="CHEBI:59789"/>
    </ligand>
</feature>
<feature type="binding site" evidence="1">
    <location>
        <position position="104"/>
    </location>
    <ligand>
        <name>S-adenosyl-L-methionine</name>
        <dbReference type="ChEBI" id="CHEBI:59789"/>
    </ligand>
</feature>
<feature type="binding site" evidence="1">
    <location>
        <position position="120"/>
    </location>
    <ligand>
        <name>S-adenosyl-L-methionine</name>
        <dbReference type="ChEBI" id="CHEBI:59789"/>
    </ligand>
</feature>
<feature type="binding site" evidence="1">
    <location>
        <position position="144"/>
    </location>
    <ligand>
        <name>S-adenosyl-L-methionine</name>
        <dbReference type="ChEBI" id="CHEBI:59789"/>
    </ligand>
</feature>
<sequence>MTKAPIAGNRTGRKLGQRVKNKKMKASSRQWLERHINDPYVQRAQLEGYRARAAFKLLEIDEKHHILRGARRIIDLGAAPGSWSQIAAKVTGSTDDDIRVAAIDFLEMTQLPGVKILQLDFLDPSAPEKLLEAVGGTPDLVISDMAAPTTGHHRTDHLRTMHLCEVAAHFAVEVLGEGGHFLTKTFQGGTERELLAMLKQNFRQVVHVKPNSSRAESVEMFLLAKGFKGRKAEGEAEEA</sequence>
<comment type="function">
    <text evidence="1">Specifically methylates the uridine in position 2552 of 23S rRNA at the 2'-O position of the ribose in the fully assembled 50S ribosomal subunit.</text>
</comment>
<comment type="catalytic activity">
    <reaction evidence="1">
        <text>uridine(2552) in 23S rRNA + S-adenosyl-L-methionine = 2'-O-methyluridine(2552) in 23S rRNA + S-adenosyl-L-homocysteine + H(+)</text>
        <dbReference type="Rhea" id="RHEA:42720"/>
        <dbReference type="Rhea" id="RHEA-COMP:10202"/>
        <dbReference type="Rhea" id="RHEA-COMP:10203"/>
        <dbReference type="ChEBI" id="CHEBI:15378"/>
        <dbReference type="ChEBI" id="CHEBI:57856"/>
        <dbReference type="ChEBI" id="CHEBI:59789"/>
        <dbReference type="ChEBI" id="CHEBI:65315"/>
        <dbReference type="ChEBI" id="CHEBI:74478"/>
        <dbReference type="EC" id="2.1.1.166"/>
    </reaction>
</comment>
<comment type="subcellular location">
    <subcellularLocation>
        <location evidence="1">Cytoplasm</location>
    </subcellularLocation>
</comment>
<comment type="similarity">
    <text evidence="1">Belongs to the class I-like SAM-binding methyltransferase superfamily. RNA methyltransferase RlmE family.</text>
</comment>
<evidence type="ECO:0000255" key="1">
    <source>
        <dbReference type="HAMAP-Rule" id="MF_01547"/>
    </source>
</evidence>
<evidence type="ECO:0000256" key="2">
    <source>
        <dbReference type="SAM" id="MobiDB-lite"/>
    </source>
</evidence>
<dbReference type="EC" id="2.1.1.166" evidence="1"/>
<dbReference type="EMBL" id="AM236080">
    <property type="protein sequence ID" value="CAK06339.1"/>
    <property type="molecule type" value="Genomic_DNA"/>
</dbReference>
<dbReference type="RefSeq" id="WP_003545710.1">
    <property type="nucleotide sequence ID" value="NC_008380.1"/>
</dbReference>
<dbReference type="SMR" id="Q1ML15"/>
<dbReference type="EnsemblBacteria" id="CAK06339">
    <property type="protein sequence ID" value="CAK06339"/>
    <property type="gene ID" value="RL0843"/>
</dbReference>
<dbReference type="KEGG" id="rle:RL0843"/>
<dbReference type="eggNOG" id="COG0293">
    <property type="taxonomic scope" value="Bacteria"/>
</dbReference>
<dbReference type="HOGENOM" id="CLU_009422_4_0_5"/>
<dbReference type="Proteomes" id="UP000006575">
    <property type="component" value="Chromosome"/>
</dbReference>
<dbReference type="GO" id="GO:0005737">
    <property type="term" value="C:cytoplasm"/>
    <property type="evidence" value="ECO:0007669"/>
    <property type="project" value="UniProtKB-SubCell"/>
</dbReference>
<dbReference type="GO" id="GO:0008650">
    <property type="term" value="F:rRNA (uridine-2'-O-)-methyltransferase activity"/>
    <property type="evidence" value="ECO:0007669"/>
    <property type="project" value="UniProtKB-UniRule"/>
</dbReference>
<dbReference type="Gene3D" id="3.40.50.150">
    <property type="entry name" value="Vaccinia Virus protein VP39"/>
    <property type="match status" value="1"/>
</dbReference>
<dbReference type="HAMAP" id="MF_01547">
    <property type="entry name" value="RNA_methyltr_E"/>
    <property type="match status" value="1"/>
</dbReference>
<dbReference type="InterPro" id="IPR050082">
    <property type="entry name" value="RNA_methyltr_RlmE"/>
</dbReference>
<dbReference type="InterPro" id="IPR002877">
    <property type="entry name" value="RNA_MeTrfase_FtsJ_dom"/>
</dbReference>
<dbReference type="InterPro" id="IPR015507">
    <property type="entry name" value="rRNA-MeTfrase_E"/>
</dbReference>
<dbReference type="InterPro" id="IPR029063">
    <property type="entry name" value="SAM-dependent_MTases_sf"/>
</dbReference>
<dbReference type="PANTHER" id="PTHR10920">
    <property type="entry name" value="RIBOSOMAL RNA METHYLTRANSFERASE"/>
    <property type="match status" value="1"/>
</dbReference>
<dbReference type="PANTHER" id="PTHR10920:SF18">
    <property type="entry name" value="RRNA METHYLTRANSFERASE 2, MITOCHONDRIAL"/>
    <property type="match status" value="1"/>
</dbReference>
<dbReference type="Pfam" id="PF01728">
    <property type="entry name" value="FtsJ"/>
    <property type="match status" value="1"/>
</dbReference>
<dbReference type="PIRSF" id="PIRSF005461">
    <property type="entry name" value="23S_rRNA_mtase"/>
    <property type="match status" value="1"/>
</dbReference>
<dbReference type="SUPFAM" id="SSF53335">
    <property type="entry name" value="S-adenosyl-L-methionine-dependent methyltransferases"/>
    <property type="match status" value="1"/>
</dbReference>
<keyword id="KW-0963">Cytoplasm</keyword>
<keyword id="KW-0489">Methyltransferase</keyword>
<keyword id="KW-0698">rRNA processing</keyword>
<keyword id="KW-0949">S-adenosyl-L-methionine</keyword>
<keyword id="KW-0808">Transferase</keyword>
<protein>
    <recommendedName>
        <fullName evidence="1">Ribosomal RNA large subunit methyltransferase E</fullName>
        <ecNumber evidence="1">2.1.1.166</ecNumber>
    </recommendedName>
    <alternativeName>
        <fullName evidence="1">23S rRNA Um2552 methyltransferase</fullName>
    </alternativeName>
    <alternativeName>
        <fullName evidence="1">rRNA (uridine-2'-O-)-methyltransferase</fullName>
    </alternativeName>
</protein>
<proteinExistence type="inferred from homology"/>
<reference key="1">
    <citation type="journal article" date="2006" name="Genome Biol.">
        <title>The genome of Rhizobium leguminosarum has recognizable core and accessory components.</title>
        <authorList>
            <person name="Young J.P.W."/>
            <person name="Crossman L.C."/>
            <person name="Johnston A.W.B."/>
            <person name="Thomson N.R."/>
            <person name="Ghazoui Z.F."/>
            <person name="Hull K.H."/>
            <person name="Wexler M."/>
            <person name="Curson A.R.J."/>
            <person name="Todd J.D."/>
            <person name="Poole P.S."/>
            <person name="Mauchline T.H."/>
            <person name="East A.K."/>
            <person name="Quail M.A."/>
            <person name="Churcher C."/>
            <person name="Arrowsmith C."/>
            <person name="Cherevach I."/>
            <person name="Chillingworth T."/>
            <person name="Clarke K."/>
            <person name="Cronin A."/>
            <person name="Davis P."/>
            <person name="Fraser A."/>
            <person name="Hance Z."/>
            <person name="Hauser H."/>
            <person name="Jagels K."/>
            <person name="Moule S."/>
            <person name="Mungall K."/>
            <person name="Norbertczak H."/>
            <person name="Rabbinowitsch E."/>
            <person name="Sanders M."/>
            <person name="Simmonds M."/>
            <person name="Whitehead S."/>
            <person name="Parkhill J."/>
        </authorList>
    </citation>
    <scope>NUCLEOTIDE SEQUENCE [LARGE SCALE GENOMIC DNA]</scope>
    <source>
        <strain>DSM 114642 / LMG 32736 / 3841</strain>
    </source>
</reference>